<proteinExistence type="inferred from homology"/>
<name>CDSA_CHLPN</name>
<reference key="1">
    <citation type="journal article" date="1999" name="Nat. Genet.">
        <title>Comparative genomes of Chlamydia pneumoniae and C. trachomatis.</title>
        <authorList>
            <person name="Kalman S."/>
            <person name="Mitchell W.P."/>
            <person name="Marathe R."/>
            <person name="Lammel C.J."/>
            <person name="Fan J."/>
            <person name="Hyman R.W."/>
            <person name="Olinger L."/>
            <person name="Grimwood J."/>
            <person name="Davis R.W."/>
            <person name="Stephens R.S."/>
        </authorList>
    </citation>
    <scope>NUCLEOTIDE SEQUENCE [LARGE SCALE GENOMIC DNA]</scope>
    <source>
        <strain>CWL029</strain>
    </source>
</reference>
<reference key="2">
    <citation type="journal article" date="2000" name="Nucleic Acids Res.">
        <title>Genome sequences of Chlamydia trachomatis MoPn and Chlamydia pneumoniae AR39.</title>
        <authorList>
            <person name="Read T.D."/>
            <person name="Brunham R.C."/>
            <person name="Shen C."/>
            <person name="Gill S.R."/>
            <person name="Heidelberg J.F."/>
            <person name="White O."/>
            <person name="Hickey E.K."/>
            <person name="Peterson J.D."/>
            <person name="Utterback T.R."/>
            <person name="Berry K.J."/>
            <person name="Bass S."/>
            <person name="Linher K.D."/>
            <person name="Weidman J.F."/>
            <person name="Khouri H.M."/>
            <person name="Craven B."/>
            <person name="Bowman C."/>
            <person name="Dodson R.J."/>
            <person name="Gwinn M.L."/>
            <person name="Nelson W.C."/>
            <person name="DeBoy R.T."/>
            <person name="Kolonay J.F."/>
            <person name="McClarty G."/>
            <person name="Salzberg S.L."/>
            <person name="Eisen J.A."/>
            <person name="Fraser C.M."/>
        </authorList>
    </citation>
    <scope>NUCLEOTIDE SEQUENCE [LARGE SCALE GENOMIC DNA]</scope>
    <source>
        <strain>AR39</strain>
    </source>
</reference>
<reference key="3">
    <citation type="journal article" date="2000" name="Nucleic Acids Res.">
        <title>Comparison of whole genome sequences of Chlamydia pneumoniae J138 from Japan and CWL029 from USA.</title>
        <authorList>
            <person name="Shirai M."/>
            <person name="Hirakawa H."/>
            <person name="Kimoto M."/>
            <person name="Tabuchi M."/>
            <person name="Kishi F."/>
            <person name="Ouchi K."/>
            <person name="Shiba T."/>
            <person name="Ishii K."/>
            <person name="Hattori M."/>
            <person name="Kuhara S."/>
            <person name="Nakazawa T."/>
        </authorList>
    </citation>
    <scope>NUCLEOTIDE SEQUENCE [LARGE SCALE GENOMIC DNA]</scope>
    <source>
        <strain>J138</strain>
    </source>
</reference>
<reference key="4">
    <citation type="submission" date="2002-05" db="EMBL/GenBank/DDBJ databases">
        <title>The genome sequence of Chlamydia pneumoniae TW183 and comparison with other Chlamydia strains based on whole genome sequence analysis.</title>
        <authorList>
            <person name="Geng M.M."/>
            <person name="Schuhmacher A."/>
            <person name="Muehldorfer I."/>
            <person name="Bensch K.W."/>
            <person name="Schaefer K.P."/>
            <person name="Schneider S."/>
            <person name="Pohl T."/>
            <person name="Essig A."/>
            <person name="Marre R."/>
            <person name="Melchers K."/>
        </authorList>
    </citation>
    <scope>NUCLEOTIDE SEQUENCE [LARGE SCALE GENOMIC DNA]</scope>
    <source>
        <strain>TW-183</strain>
    </source>
</reference>
<accession>Q9Z7Y6</accession>
<accession>Q9JQ17</accession>
<protein>
    <recommendedName>
        <fullName>Phosphatidate cytidylyltransferase</fullName>
        <ecNumber>2.7.7.41</ecNumber>
    </recommendedName>
    <alternativeName>
        <fullName>CDP-DAG synthase</fullName>
    </alternativeName>
    <alternativeName>
        <fullName>CDP-DG synthase</fullName>
    </alternativeName>
    <alternativeName>
        <fullName>CDP-diacylglycerol synthase</fullName>
        <shortName>CDS</shortName>
    </alternativeName>
    <alternativeName>
        <fullName>CDP-diglyceride pyrophosphorylase</fullName>
    </alternativeName>
    <alternativeName>
        <fullName>CDP-diglyceride synthase</fullName>
    </alternativeName>
    <alternativeName>
        <fullName>CTP:phosphatidate cytidylyltransferase</fullName>
    </alternativeName>
</protein>
<sequence length="308" mass="34031">MLNSNKFKSKTGAYGDLFQRVVVHSLVLTFLVLLLYSSLFPLTSFALGFITATCGAVGTYEYSSMAKAKMHYPLSTFSAIGSFLFLALSFLSIRWGHSLPGFFDALPWTLLIVWVVWSIFRVRKSTIGALQLSGVTLFSILYVGIPIRLFLHVLYSFIHTQEPYLGIWWASFLIATTKGADIFGYFFGKAFGNKKIAPQISPNKTVVGFVAGCLGATLISFIFFLQIPTRFASYFPMPAILIPLGLALGITGFFGDIIESIFKRDAHLKNSNKLKAVGGMLDTLDSLLLSTPIAYLFLLITQSKEFIG</sequence>
<comment type="catalytic activity">
    <reaction>
        <text>a 1,2-diacyl-sn-glycero-3-phosphate + CTP + H(+) = a CDP-1,2-diacyl-sn-glycerol + diphosphate</text>
        <dbReference type="Rhea" id="RHEA:16229"/>
        <dbReference type="ChEBI" id="CHEBI:15378"/>
        <dbReference type="ChEBI" id="CHEBI:33019"/>
        <dbReference type="ChEBI" id="CHEBI:37563"/>
        <dbReference type="ChEBI" id="CHEBI:58332"/>
        <dbReference type="ChEBI" id="CHEBI:58608"/>
        <dbReference type="EC" id="2.7.7.41"/>
    </reaction>
</comment>
<comment type="pathway">
    <text>Phospholipid metabolism; CDP-diacylglycerol biosynthesis; CDP-diacylglycerol from sn-glycerol 3-phosphate: step 3/3.</text>
</comment>
<comment type="subcellular location">
    <subcellularLocation>
        <location evidence="1">Cell membrane</location>
        <topology evidence="1">Multi-pass membrane protein</topology>
    </subcellularLocation>
</comment>
<comment type="similarity">
    <text evidence="3">Belongs to the CDS family.</text>
</comment>
<keyword id="KW-1003">Cell membrane</keyword>
<keyword id="KW-0444">Lipid biosynthesis</keyword>
<keyword id="KW-0443">Lipid metabolism</keyword>
<keyword id="KW-0472">Membrane</keyword>
<keyword id="KW-0548">Nucleotidyltransferase</keyword>
<keyword id="KW-0594">Phospholipid biosynthesis</keyword>
<keyword id="KW-1208">Phospholipid metabolism</keyword>
<keyword id="KW-0808">Transferase</keyword>
<keyword id="KW-0812">Transmembrane</keyword>
<keyword id="KW-1133">Transmembrane helix</keyword>
<feature type="chain" id="PRO_0000090732" description="Phosphatidate cytidylyltransferase">
    <location>
        <begin position="1"/>
        <end position="308"/>
    </location>
</feature>
<feature type="transmembrane region" description="Helical" evidence="2">
    <location>
        <begin position="30"/>
        <end position="50"/>
    </location>
</feature>
<feature type="transmembrane region" description="Helical" evidence="2">
    <location>
        <begin position="73"/>
        <end position="93"/>
    </location>
</feature>
<feature type="transmembrane region" description="Helical" evidence="2">
    <location>
        <begin position="100"/>
        <end position="120"/>
    </location>
</feature>
<feature type="transmembrane region" description="Helical" evidence="2">
    <location>
        <begin position="127"/>
        <end position="147"/>
    </location>
</feature>
<feature type="transmembrane region" description="Helical" evidence="2">
    <location>
        <begin position="167"/>
        <end position="187"/>
    </location>
</feature>
<feature type="transmembrane region" description="Helical" evidence="2">
    <location>
        <begin position="205"/>
        <end position="225"/>
    </location>
</feature>
<feature type="transmembrane region" description="Helical" evidence="2">
    <location>
        <begin position="235"/>
        <end position="255"/>
    </location>
</feature>
<feature type="transmembrane region" description="Helical" evidence="2">
    <location>
        <begin position="280"/>
        <end position="300"/>
    </location>
</feature>
<evidence type="ECO:0000250" key="1"/>
<evidence type="ECO:0000255" key="2"/>
<evidence type="ECO:0000305" key="3"/>
<organism>
    <name type="scientific">Chlamydia pneumoniae</name>
    <name type="common">Chlamydophila pneumoniae</name>
    <dbReference type="NCBI Taxonomy" id="83558"/>
    <lineage>
        <taxon>Bacteria</taxon>
        <taxon>Pseudomonadati</taxon>
        <taxon>Chlamydiota</taxon>
        <taxon>Chlamydiia</taxon>
        <taxon>Chlamydiales</taxon>
        <taxon>Chlamydiaceae</taxon>
        <taxon>Chlamydia/Chlamydophila group</taxon>
        <taxon>Chlamydia</taxon>
    </lineage>
</organism>
<gene>
    <name type="primary">cdsA</name>
    <name type="ordered locus">CPn_0567</name>
    <name type="ordered locus">CP_0182</name>
    <name type="ordered locus">CpB0589</name>
</gene>
<dbReference type="EC" id="2.7.7.41"/>
<dbReference type="EMBL" id="AE001363">
    <property type="protein sequence ID" value="AAD18707.1"/>
    <property type="molecule type" value="Genomic_DNA"/>
</dbReference>
<dbReference type="EMBL" id="AE002161">
    <property type="protein sequence ID" value="AAF38055.1"/>
    <property type="molecule type" value="Genomic_DNA"/>
</dbReference>
<dbReference type="EMBL" id="BA000008">
    <property type="protein sequence ID" value="BAA98773.1"/>
    <property type="molecule type" value="Genomic_DNA"/>
</dbReference>
<dbReference type="EMBL" id="AE009440">
    <property type="protein sequence ID" value="AAP98518.1"/>
    <property type="molecule type" value="Genomic_DNA"/>
</dbReference>
<dbReference type="PIR" id="C86561">
    <property type="entry name" value="C86561"/>
</dbReference>
<dbReference type="PIR" id="H72062">
    <property type="entry name" value="H72062"/>
</dbReference>
<dbReference type="RefSeq" id="NP_224763.1">
    <property type="nucleotide sequence ID" value="NC_000922.1"/>
</dbReference>
<dbReference type="RefSeq" id="WP_010883205.1">
    <property type="nucleotide sequence ID" value="NZ_LN847257.1"/>
</dbReference>
<dbReference type="SMR" id="Q9Z7Y6"/>
<dbReference type="STRING" id="406984.CPK_ORF01084"/>
<dbReference type="GeneID" id="45050611"/>
<dbReference type="KEGG" id="cpa:CP_0182"/>
<dbReference type="KEGG" id="cpj:cdsA"/>
<dbReference type="KEGG" id="cpn:CPn_0567"/>
<dbReference type="KEGG" id="cpt:CpB0589"/>
<dbReference type="PATRIC" id="fig|115713.3.peg.632"/>
<dbReference type="eggNOG" id="COG0575">
    <property type="taxonomic scope" value="Bacteria"/>
</dbReference>
<dbReference type="HOGENOM" id="CLU_037294_3_3_0"/>
<dbReference type="OrthoDB" id="9799199at2"/>
<dbReference type="UniPathway" id="UPA00557">
    <property type="reaction ID" value="UER00614"/>
</dbReference>
<dbReference type="Proteomes" id="UP000000583">
    <property type="component" value="Chromosome"/>
</dbReference>
<dbReference type="Proteomes" id="UP000000801">
    <property type="component" value="Chromosome"/>
</dbReference>
<dbReference type="GO" id="GO:0005886">
    <property type="term" value="C:plasma membrane"/>
    <property type="evidence" value="ECO:0007669"/>
    <property type="project" value="UniProtKB-SubCell"/>
</dbReference>
<dbReference type="GO" id="GO:0004605">
    <property type="term" value="F:phosphatidate cytidylyltransferase activity"/>
    <property type="evidence" value="ECO:0007669"/>
    <property type="project" value="UniProtKB-EC"/>
</dbReference>
<dbReference type="GO" id="GO:0016024">
    <property type="term" value="P:CDP-diacylglycerol biosynthetic process"/>
    <property type="evidence" value="ECO:0007669"/>
    <property type="project" value="UniProtKB-UniPathway"/>
</dbReference>
<dbReference type="PANTHER" id="PTHR46382">
    <property type="entry name" value="PHOSPHATIDATE CYTIDYLYLTRANSFERASE"/>
    <property type="match status" value="1"/>
</dbReference>
<dbReference type="PANTHER" id="PTHR46382:SF1">
    <property type="entry name" value="PHOSPHATIDATE CYTIDYLYLTRANSFERASE"/>
    <property type="match status" value="1"/>
</dbReference>
<dbReference type="Pfam" id="PF01148">
    <property type="entry name" value="CTP_transf_1"/>
    <property type="match status" value="1"/>
</dbReference>